<dbReference type="EC" id="7.2.1.4" evidence="1"/>
<dbReference type="EMBL" id="AJ132817">
    <property type="protein sequence ID" value="CAB41640.1"/>
    <property type="molecule type" value="Genomic_DNA"/>
</dbReference>
<dbReference type="EMBL" id="CP000099">
    <property type="protein sequence ID" value="AAZ70223.1"/>
    <property type="molecule type" value="Genomic_DNA"/>
</dbReference>
<dbReference type="SMR" id="Q9Y8K2"/>
<dbReference type="STRING" id="269797.Mbar_A1260"/>
<dbReference type="PaxDb" id="269797-Mbar_A1260"/>
<dbReference type="KEGG" id="mba:Mbar_A1260"/>
<dbReference type="eggNOG" id="arCOG04868">
    <property type="taxonomic scope" value="Archaea"/>
</dbReference>
<dbReference type="HOGENOM" id="CLU_092286_0_0_2"/>
<dbReference type="OrthoDB" id="60591at2157"/>
<dbReference type="UniPathway" id="UPA00640">
    <property type="reaction ID" value="UER00698"/>
</dbReference>
<dbReference type="GO" id="GO:0005886">
    <property type="term" value="C:plasma membrane"/>
    <property type="evidence" value="ECO:0007669"/>
    <property type="project" value="UniProtKB-SubCell"/>
</dbReference>
<dbReference type="GO" id="GO:0030269">
    <property type="term" value="F:tetrahydromethanopterin S-methyltransferase activity"/>
    <property type="evidence" value="ECO:0007669"/>
    <property type="project" value="UniProtKB-UniRule"/>
</dbReference>
<dbReference type="GO" id="GO:0019386">
    <property type="term" value="P:methanogenesis, from carbon dioxide"/>
    <property type="evidence" value="ECO:0007669"/>
    <property type="project" value="UniProtKB-UniRule"/>
</dbReference>
<dbReference type="GO" id="GO:0032259">
    <property type="term" value="P:methylation"/>
    <property type="evidence" value="ECO:0007669"/>
    <property type="project" value="UniProtKB-KW"/>
</dbReference>
<dbReference type="GO" id="GO:0006730">
    <property type="term" value="P:one-carbon metabolic process"/>
    <property type="evidence" value="ECO:0007669"/>
    <property type="project" value="UniProtKB-UniRule"/>
</dbReference>
<dbReference type="HAMAP" id="MF_01096">
    <property type="entry name" value="MtrC"/>
    <property type="match status" value="1"/>
</dbReference>
<dbReference type="InterPro" id="IPR005865">
    <property type="entry name" value="THM_MeTrfase_su_C"/>
</dbReference>
<dbReference type="NCBIfam" id="TIGR01148">
    <property type="entry name" value="mtrC"/>
    <property type="match status" value="1"/>
</dbReference>
<dbReference type="Pfam" id="PF04211">
    <property type="entry name" value="MtrC"/>
    <property type="match status" value="1"/>
</dbReference>
<dbReference type="PIRSF" id="PIRSF006530">
    <property type="entry name" value="MtrC"/>
    <property type="match status" value="1"/>
</dbReference>
<gene>
    <name evidence="1" type="primary">mtrC</name>
    <name type="ordered locus">Mbar_A1260</name>
</gene>
<name>MTRC_METBF</name>
<accession>Q9Y8K2</accession>
<accession>Q46D19</accession>
<reference key="1">
    <citation type="journal article" date="1999" name="FEBS Lett.">
        <title>The energy conserving methyltetrahydromethanopterin:coenzyme M methyltransferase complex from methanogenic archaea: function of the subunit MtrH.</title>
        <authorList>
            <person name="Hippler B."/>
            <person name="Thauer R.K."/>
        </authorList>
    </citation>
    <scope>NUCLEOTIDE SEQUENCE [GENOMIC DNA]</scope>
</reference>
<reference key="2">
    <citation type="journal article" date="2006" name="J. Bacteriol.">
        <title>The Methanosarcina barkeri genome: comparative analysis with Methanosarcina acetivorans and Methanosarcina mazei reveals extensive rearrangement within methanosarcinal genomes.</title>
        <authorList>
            <person name="Maeder D.L."/>
            <person name="Anderson I."/>
            <person name="Brettin T.S."/>
            <person name="Bruce D.C."/>
            <person name="Gilna P."/>
            <person name="Han C.S."/>
            <person name="Lapidus A."/>
            <person name="Metcalf W.W."/>
            <person name="Saunders E."/>
            <person name="Tapia R."/>
            <person name="Sowers K.R."/>
        </authorList>
    </citation>
    <scope>NUCLEOTIDE SEQUENCE [LARGE SCALE GENOMIC DNA]</scope>
    <source>
        <strain>Fusaro / DSM 804</strain>
    </source>
</reference>
<proteinExistence type="inferred from homology"/>
<keyword id="KW-1003">Cell membrane</keyword>
<keyword id="KW-0472">Membrane</keyword>
<keyword id="KW-0484">Methanogenesis</keyword>
<keyword id="KW-0489">Methyltransferase</keyword>
<keyword id="KW-0554">One-carbon metabolism</keyword>
<keyword id="KW-0808">Transferase</keyword>
<keyword id="KW-1278">Translocase</keyword>
<keyword id="KW-0812">Transmembrane</keyword>
<keyword id="KW-1133">Transmembrane helix</keyword>
<organism>
    <name type="scientific">Methanosarcina barkeri (strain Fusaro / DSM 804)</name>
    <dbReference type="NCBI Taxonomy" id="269797"/>
    <lineage>
        <taxon>Archaea</taxon>
        <taxon>Methanobacteriati</taxon>
        <taxon>Methanobacteriota</taxon>
        <taxon>Stenosarchaea group</taxon>
        <taxon>Methanomicrobia</taxon>
        <taxon>Methanosarcinales</taxon>
        <taxon>Methanosarcinaceae</taxon>
        <taxon>Methanosarcina</taxon>
    </lineage>
</organism>
<sequence>MSAGGAGGEAKGGYPPQTIMALGIVGGLVGIYLGNFAPPAYSFFGGLGAICATVWGADAVRRVASYGLGTGVPSIGMLALGMGILAALFGLSVGGTAGPIVAIVVAAIIGGVIGALANKVIGMGIPIMEKAMVEISCAGTLVILGLSVVIAGSFDFASVVQYVVANGYIALIFIIGGMGILHPFNASLGPDEKQDRTLMLAVEKGAIALIIAGFASSLHEGLMAAGLNMLIGIIIWYVAFSKHYALIKRDAYAVVGSGMLPSSEELQ</sequence>
<protein>
    <recommendedName>
        <fullName evidence="1">Tetrahydromethanopterin S-methyltransferase subunit C</fullName>
        <ecNumber evidence="1">7.2.1.4</ecNumber>
    </recommendedName>
    <alternativeName>
        <fullName evidence="1">N5-methyltetrahydromethanopterin--coenzyme M methyltransferase subunit C</fullName>
    </alternativeName>
</protein>
<feature type="chain" id="PRO_0000147521" description="Tetrahydromethanopterin S-methyltransferase subunit C">
    <location>
        <begin position="1"/>
        <end position="267"/>
    </location>
</feature>
<feature type="transmembrane region" description="Helical" evidence="1">
    <location>
        <begin position="19"/>
        <end position="39"/>
    </location>
</feature>
<feature type="transmembrane region" description="Helical" evidence="1">
    <location>
        <begin position="75"/>
        <end position="95"/>
    </location>
</feature>
<feature type="transmembrane region" description="Helical" evidence="1">
    <location>
        <begin position="97"/>
        <end position="117"/>
    </location>
</feature>
<feature type="transmembrane region" description="Helical" evidence="1">
    <location>
        <begin position="140"/>
        <end position="160"/>
    </location>
</feature>
<feature type="transmembrane region" description="Helical" evidence="1">
    <location>
        <begin position="162"/>
        <end position="182"/>
    </location>
</feature>
<feature type="transmembrane region" description="Helical" evidence="1">
    <location>
        <begin position="198"/>
        <end position="218"/>
    </location>
</feature>
<feature type="transmembrane region" description="Helical" evidence="1">
    <location>
        <begin position="221"/>
        <end position="241"/>
    </location>
</feature>
<feature type="sequence conflict" description="In Ref. 1; CAB41640." evidence="2" ref="1">
    <original>V</original>
    <variation>D</variation>
    <location>
        <position position="54"/>
    </location>
</feature>
<evidence type="ECO:0000255" key="1">
    <source>
        <dbReference type="HAMAP-Rule" id="MF_01096"/>
    </source>
</evidence>
<evidence type="ECO:0000305" key="2"/>
<comment type="function">
    <text evidence="1">Part of a complex that catalyzes the formation of methyl-coenzyme M and tetrahydromethanopterin from coenzyme M and methyl-tetrahydromethanopterin. This is an energy-conserving, sodium-ion translocating step.</text>
</comment>
<comment type="catalytic activity">
    <reaction evidence="1">
        <text>5-methyl-5,6,7,8-tetrahydromethanopterin + coenzyme M + 2 Na(+)(in) = 5,6,7,8-tetrahydromethanopterin + methyl-coenzyme M + 2 Na(+)(out)</text>
        <dbReference type="Rhea" id="RHEA:53492"/>
        <dbReference type="ChEBI" id="CHEBI:29101"/>
        <dbReference type="ChEBI" id="CHEBI:58103"/>
        <dbReference type="ChEBI" id="CHEBI:58116"/>
        <dbReference type="ChEBI" id="CHEBI:58286"/>
        <dbReference type="ChEBI" id="CHEBI:58319"/>
        <dbReference type="EC" id="7.2.1.4"/>
    </reaction>
</comment>
<comment type="pathway">
    <text evidence="1">One-carbon metabolism; methanogenesis from CO(2); methyl-coenzyme M from 5,10-methylene-5,6,7,8-tetrahydromethanopterin: step 2/2.</text>
</comment>
<comment type="subunit">
    <text evidence="1">The complex is composed of 8 subunits; MtrA, MtrB, MtrC, MtrD, MtrE, MtrF, MtrG and MtrH.</text>
</comment>
<comment type="subcellular location">
    <subcellularLocation>
        <location evidence="1">Cell membrane</location>
        <topology evidence="1">Multi-pass membrane protein</topology>
    </subcellularLocation>
</comment>
<comment type="similarity">
    <text evidence="1">Belongs to the MtrC family.</text>
</comment>